<gene>
    <name evidence="1" type="primary">ppaX</name>
    <name type="ordered locus">lwe2429</name>
</gene>
<evidence type="ECO:0000255" key="1">
    <source>
        <dbReference type="HAMAP-Rule" id="MF_01250"/>
    </source>
</evidence>
<feature type="chain" id="PRO_1000067190" description="Pyrophosphatase PpaX">
    <location>
        <begin position="1"/>
        <end position="217"/>
    </location>
</feature>
<feature type="active site" description="Nucleophile" evidence="1">
    <location>
        <position position="11"/>
    </location>
</feature>
<dbReference type="EC" id="3.6.1.1" evidence="1"/>
<dbReference type="EMBL" id="AM263198">
    <property type="protein sequence ID" value="CAK21847.1"/>
    <property type="molecule type" value="Genomic_DNA"/>
</dbReference>
<dbReference type="RefSeq" id="WP_011703165.1">
    <property type="nucleotide sequence ID" value="NC_008555.1"/>
</dbReference>
<dbReference type="SMR" id="A0ALG5"/>
<dbReference type="STRING" id="386043.lwe2429"/>
<dbReference type="GeneID" id="61190348"/>
<dbReference type="KEGG" id="lwe:lwe2429"/>
<dbReference type="eggNOG" id="COG0546">
    <property type="taxonomic scope" value="Bacteria"/>
</dbReference>
<dbReference type="HOGENOM" id="CLU_045011_19_3_9"/>
<dbReference type="OrthoDB" id="9807630at2"/>
<dbReference type="Proteomes" id="UP000000779">
    <property type="component" value="Chromosome"/>
</dbReference>
<dbReference type="GO" id="GO:0005829">
    <property type="term" value="C:cytosol"/>
    <property type="evidence" value="ECO:0007669"/>
    <property type="project" value="TreeGrafter"/>
</dbReference>
<dbReference type="GO" id="GO:0004427">
    <property type="term" value="F:inorganic diphosphate phosphatase activity"/>
    <property type="evidence" value="ECO:0007669"/>
    <property type="project" value="UniProtKB-UniRule"/>
</dbReference>
<dbReference type="GO" id="GO:0000287">
    <property type="term" value="F:magnesium ion binding"/>
    <property type="evidence" value="ECO:0007669"/>
    <property type="project" value="UniProtKB-UniRule"/>
</dbReference>
<dbReference type="GO" id="GO:0008967">
    <property type="term" value="F:phosphoglycolate phosphatase activity"/>
    <property type="evidence" value="ECO:0007669"/>
    <property type="project" value="TreeGrafter"/>
</dbReference>
<dbReference type="GO" id="GO:0006281">
    <property type="term" value="P:DNA repair"/>
    <property type="evidence" value="ECO:0007669"/>
    <property type="project" value="TreeGrafter"/>
</dbReference>
<dbReference type="CDD" id="cd02616">
    <property type="entry name" value="HAD_PPase"/>
    <property type="match status" value="1"/>
</dbReference>
<dbReference type="FunFam" id="3.40.50.1000:FF:000022">
    <property type="entry name" value="Phosphoglycolate phosphatase"/>
    <property type="match status" value="1"/>
</dbReference>
<dbReference type="Gene3D" id="3.40.50.1000">
    <property type="entry name" value="HAD superfamily/HAD-like"/>
    <property type="match status" value="1"/>
</dbReference>
<dbReference type="Gene3D" id="1.10.150.240">
    <property type="entry name" value="Putative phosphatase, domain 2"/>
    <property type="match status" value="1"/>
</dbReference>
<dbReference type="HAMAP" id="MF_01250">
    <property type="entry name" value="Pyrophosphat_PpaX"/>
    <property type="match status" value="1"/>
</dbReference>
<dbReference type="InterPro" id="IPR050155">
    <property type="entry name" value="HAD-like_hydrolase_sf"/>
</dbReference>
<dbReference type="InterPro" id="IPR036412">
    <property type="entry name" value="HAD-like_sf"/>
</dbReference>
<dbReference type="InterPro" id="IPR006439">
    <property type="entry name" value="HAD-SF_hydro_IA"/>
</dbReference>
<dbReference type="InterPro" id="IPR041492">
    <property type="entry name" value="HAD_2"/>
</dbReference>
<dbReference type="InterPro" id="IPR023214">
    <property type="entry name" value="HAD_sf"/>
</dbReference>
<dbReference type="InterPro" id="IPR023198">
    <property type="entry name" value="PGP-like_dom2"/>
</dbReference>
<dbReference type="InterPro" id="IPR023733">
    <property type="entry name" value="Pyrophosphatase_Ppax"/>
</dbReference>
<dbReference type="NCBIfam" id="TIGR01549">
    <property type="entry name" value="HAD-SF-IA-v1"/>
    <property type="match status" value="1"/>
</dbReference>
<dbReference type="NCBIfam" id="NF009804">
    <property type="entry name" value="PRK13288.1"/>
    <property type="match status" value="1"/>
</dbReference>
<dbReference type="PANTHER" id="PTHR43434">
    <property type="entry name" value="PHOSPHOGLYCOLATE PHOSPHATASE"/>
    <property type="match status" value="1"/>
</dbReference>
<dbReference type="PANTHER" id="PTHR43434:SF26">
    <property type="entry name" value="PYROPHOSPHATASE PPAX"/>
    <property type="match status" value="1"/>
</dbReference>
<dbReference type="Pfam" id="PF13419">
    <property type="entry name" value="HAD_2"/>
    <property type="match status" value="1"/>
</dbReference>
<dbReference type="PRINTS" id="PR00413">
    <property type="entry name" value="HADHALOGNASE"/>
</dbReference>
<dbReference type="SFLD" id="SFLDG01135">
    <property type="entry name" value="C1.5.6:_HAD__Beta-PGM__Phospha"/>
    <property type="match status" value="1"/>
</dbReference>
<dbReference type="SFLD" id="SFLDS00003">
    <property type="entry name" value="Haloacid_Dehalogenase"/>
    <property type="match status" value="1"/>
</dbReference>
<dbReference type="SUPFAM" id="SSF56784">
    <property type="entry name" value="HAD-like"/>
    <property type="match status" value="1"/>
</dbReference>
<name>PPAX_LISW6</name>
<sequence length="217" mass="24768">MTGKITTLLFDLDGTLINTNELIIKTFQATLQEFLPDRVFTREDILPFIGPSLMETFREINPAHAEEMRVFYREYNLKHHDDLILEYEGVYEAIRVLYEEDYKLGIVSTKMYDTIMRGLKVTGLDKFFQVVIGLDQVSNAKPDPEGIEMALSLLNATKEEAIMIGDNYHDIEAGKNAETLTAGVAWAIKGPEHLAQFQPDFMLEKMSDLLAIVRDEE</sequence>
<comment type="function">
    <text evidence="1">Hydrolyzes pyrophosphate formed during P-Ser-HPr dephosphorylation by HPrK/P. Might play a role in controlling the intracellular pyrophosphate pool.</text>
</comment>
<comment type="catalytic activity">
    <reaction evidence="1">
        <text>diphosphate + H2O = 2 phosphate + H(+)</text>
        <dbReference type="Rhea" id="RHEA:24576"/>
        <dbReference type="ChEBI" id="CHEBI:15377"/>
        <dbReference type="ChEBI" id="CHEBI:15378"/>
        <dbReference type="ChEBI" id="CHEBI:33019"/>
        <dbReference type="ChEBI" id="CHEBI:43474"/>
        <dbReference type="EC" id="3.6.1.1"/>
    </reaction>
</comment>
<comment type="cofactor">
    <cofactor evidence="1">
        <name>Mg(2+)</name>
        <dbReference type="ChEBI" id="CHEBI:18420"/>
    </cofactor>
</comment>
<comment type="similarity">
    <text evidence="1">Belongs to the HAD-like hydrolase superfamily. PpaX family.</text>
</comment>
<proteinExistence type="inferred from homology"/>
<organism>
    <name type="scientific">Listeria welshimeri serovar 6b (strain ATCC 35897 / DSM 20650 / CCUG 15529 / CIP 8149 / NCTC 11857 / SLCC 5334 / V8)</name>
    <dbReference type="NCBI Taxonomy" id="386043"/>
    <lineage>
        <taxon>Bacteria</taxon>
        <taxon>Bacillati</taxon>
        <taxon>Bacillota</taxon>
        <taxon>Bacilli</taxon>
        <taxon>Bacillales</taxon>
        <taxon>Listeriaceae</taxon>
        <taxon>Listeria</taxon>
    </lineage>
</organism>
<accession>A0ALG5</accession>
<keyword id="KW-0378">Hydrolase</keyword>
<keyword id="KW-0460">Magnesium</keyword>
<protein>
    <recommendedName>
        <fullName evidence="1">Pyrophosphatase PpaX</fullName>
        <ecNumber evidence="1">3.6.1.1</ecNumber>
    </recommendedName>
</protein>
<reference key="1">
    <citation type="journal article" date="2006" name="J. Bacteriol.">
        <title>Whole-genome sequence of Listeria welshimeri reveals common steps in genome reduction with Listeria innocua as compared to Listeria monocytogenes.</title>
        <authorList>
            <person name="Hain T."/>
            <person name="Steinweg C."/>
            <person name="Kuenne C.T."/>
            <person name="Billion A."/>
            <person name="Ghai R."/>
            <person name="Chatterjee S.S."/>
            <person name="Domann E."/>
            <person name="Kaerst U."/>
            <person name="Goesmann A."/>
            <person name="Bekel T."/>
            <person name="Bartels D."/>
            <person name="Kaiser O."/>
            <person name="Meyer F."/>
            <person name="Puehler A."/>
            <person name="Weisshaar B."/>
            <person name="Wehland J."/>
            <person name="Liang C."/>
            <person name="Dandekar T."/>
            <person name="Lampidis R."/>
            <person name="Kreft J."/>
            <person name="Goebel W."/>
            <person name="Chakraborty T."/>
        </authorList>
    </citation>
    <scope>NUCLEOTIDE SEQUENCE [LARGE SCALE GENOMIC DNA]</scope>
    <source>
        <strain>ATCC 35897 / DSM 20650 / CCUG 15529 / CIP 8149 / NCTC 11857 / SLCC 5334 / V8</strain>
    </source>
</reference>